<reference key="1">
    <citation type="journal article" date="2001" name="DNA Res.">
        <title>Prediction of the coding sequences of unidentified human genes. XXII. The complete sequences of 50 new cDNA clones which code for large proteins.</title>
        <authorList>
            <person name="Nagase T."/>
            <person name="Kikuno R."/>
            <person name="Ohara O."/>
        </authorList>
    </citation>
    <scope>NUCLEOTIDE SEQUENCE [LARGE SCALE MRNA] (ISOFORM 1)</scope>
    <source>
        <tissue>Brain</tissue>
    </source>
</reference>
<reference key="2">
    <citation type="journal article" date="2004" name="Nat. Genet.">
        <title>Complete sequencing and characterization of 21,243 full-length human cDNAs.</title>
        <authorList>
            <person name="Ota T."/>
            <person name="Suzuki Y."/>
            <person name="Nishikawa T."/>
            <person name="Otsuki T."/>
            <person name="Sugiyama T."/>
            <person name="Irie R."/>
            <person name="Wakamatsu A."/>
            <person name="Hayashi K."/>
            <person name="Sato H."/>
            <person name="Nagai K."/>
            <person name="Kimura K."/>
            <person name="Makita H."/>
            <person name="Sekine M."/>
            <person name="Obayashi M."/>
            <person name="Nishi T."/>
            <person name="Shibahara T."/>
            <person name="Tanaka T."/>
            <person name="Ishii S."/>
            <person name="Yamamoto J."/>
            <person name="Saito K."/>
            <person name="Kawai Y."/>
            <person name="Isono Y."/>
            <person name="Nakamura Y."/>
            <person name="Nagahari K."/>
            <person name="Murakami K."/>
            <person name="Yasuda T."/>
            <person name="Iwayanagi T."/>
            <person name="Wagatsuma M."/>
            <person name="Shiratori A."/>
            <person name="Sudo H."/>
            <person name="Hosoiri T."/>
            <person name="Kaku Y."/>
            <person name="Kodaira H."/>
            <person name="Kondo H."/>
            <person name="Sugawara M."/>
            <person name="Takahashi M."/>
            <person name="Kanda K."/>
            <person name="Yokoi T."/>
            <person name="Furuya T."/>
            <person name="Kikkawa E."/>
            <person name="Omura Y."/>
            <person name="Abe K."/>
            <person name="Kamihara K."/>
            <person name="Katsuta N."/>
            <person name="Sato K."/>
            <person name="Tanikawa M."/>
            <person name="Yamazaki M."/>
            <person name="Ninomiya K."/>
            <person name="Ishibashi T."/>
            <person name="Yamashita H."/>
            <person name="Murakawa K."/>
            <person name="Fujimori K."/>
            <person name="Tanai H."/>
            <person name="Kimata M."/>
            <person name="Watanabe M."/>
            <person name="Hiraoka S."/>
            <person name="Chiba Y."/>
            <person name="Ishida S."/>
            <person name="Ono Y."/>
            <person name="Takiguchi S."/>
            <person name="Watanabe S."/>
            <person name="Yosida M."/>
            <person name="Hotuta T."/>
            <person name="Kusano J."/>
            <person name="Kanehori K."/>
            <person name="Takahashi-Fujii A."/>
            <person name="Hara H."/>
            <person name="Tanase T.-O."/>
            <person name="Nomura Y."/>
            <person name="Togiya S."/>
            <person name="Komai F."/>
            <person name="Hara R."/>
            <person name="Takeuchi K."/>
            <person name="Arita M."/>
            <person name="Imose N."/>
            <person name="Musashino K."/>
            <person name="Yuuki H."/>
            <person name="Oshima A."/>
            <person name="Sasaki N."/>
            <person name="Aotsuka S."/>
            <person name="Yoshikawa Y."/>
            <person name="Matsunawa H."/>
            <person name="Ichihara T."/>
            <person name="Shiohata N."/>
            <person name="Sano S."/>
            <person name="Moriya S."/>
            <person name="Momiyama H."/>
            <person name="Satoh N."/>
            <person name="Takami S."/>
            <person name="Terashima Y."/>
            <person name="Suzuki O."/>
            <person name="Nakagawa S."/>
            <person name="Senoh A."/>
            <person name="Mizoguchi H."/>
            <person name="Goto Y."/>
            <person name="Shimizu F."/>
            <person name="Wakebe H."/>
            <person name="Hishigaki H."/>
            <person name="Watanabe T."/>
            <person name="Sugiyama A."/>
            <person name="Takemoto M."/>
            <person name="Kawakami B."/>
            <person name="Yamazaki M."/>
            <person name="Watanabe K."/>
            <person name="Kumagai A."/>
            <person name="Itakura S."/>
            <person name="Fukuzumi Y."/>
            <person name="Fujimori Y."/>
            <person name="Komiyama M."/>
            <person name="Tashiro H."/>
            <person name="Tanigami A."/>
            <person name="Fujiwara T."/>
            <person name="Ono T."/>
            <person name="Yamada K."/>
            <person name="Fujii Y."/>
            <person name="Ozaki K."/>
            <person name="Hirao M."/>
            <person name="Ohmori Y."/>
            <person name="Kawabata A."/>
            <person name="Hikiji T."/>
            <person name="Kobatake N."/>
            <person name="Inagaki H."/>
            <person name="Ikema Y."/>
            <person name="Okamoto S."/>
            <person name="Okitani R."/>
            <person name="Kawakami T."/>
            <person name="Noguchi S."/>
            <person name="Itoh T."/>
            <person name="Shigeta K."/>
            <person name="Senba T."/>
            <person name="Matsumura K."/>
            <person name="Nakajima Y."/>
            <person name="Mizuno T."/>
            <person name="Morinaga M."/>
            <person name="Sasaki M."/>
            <person name="Togashi T."/>
            <person name="Oyama M."/>
            <person name="Hata H."/>
            <person name="Watanabe M."/>
            <person name="Komatsu T."/>
            <person name="Mizushima-Sugano J."/>
            <person name="Satoh T."/>
            <person name="Shirai Y."/>
            <person name="Takahashi Y."/>
            <person name="Nakagawa K."/>
            <person name="Okumura K."/>
            <person name="Nagase T."/>
            <person name="Nomura N."/>
            <person name="Kikuchi H."/>
            <person name="Masuho Y."/>
            <person name="Yamashita R."/>
            <person name="Nakai K."/>
            <person name="Yada T."/>
            <person name="Nakamura Y."/>
            <person name="Ohara O."/>
            <person name="Isogai T."/>
            <person name="Sugano S."/>
        </authorList>
    </citation>
    <scope>NUCLEOTIDE SEQUENCE [LARGE SCALE MRNA] (ISOFORM 2)</scope>
</reference>
<reference key="3">
    <citation type="journal article" date="2003" name="Nature">
        <title>The DNA sequence of human chromosome 7.</title>
        <authorList>
            <person name="Hillier L.W."/>
            <person name="Fulton R.S."/>
            <person name="Fulton L.A."/>
            <person name="Graves T.A."/>
            <person name="Pepin K.H."/>
            <person name="Wagner-McPherson C."/>
            <person name="Layman D."/>
            <person name="Maas J."/>
            <person name="Jaeger S."/>
            <person name="Walker R."/>
            <person name="Wylie K."/>
            <person name="Sekhon M."/>
            <person name="Becker M.C."/>
            <person name="O'Laughlin M.D."/>
            <person name="Schaller M.E."/>
            <person name="Fewell G.A."/>
            <person name="Delehaunty K.D."/>
            <person name="Miner T.L."/>
            <person name="Nash W.E."/>
            <person name="Cordes M."/>
            <person name="Du H."/>
            <person name="Sun H."/>
            <person name="Edwards J."/>
            <person name="Bradshaw-Cordum H."/>
            <person name="Ali J."/>
            <person name="Andrews S."/>
            <person name="Isak A."/>
            <person name="Vanbrunt A."/>
            <person name="Nguyen C."/>
            <person name="Du F."/>
            <person name="Lamar B."/>
            <person name="Courtney L."/>
            <person name="Kalicki J."/>
            <person name="Ozersky P."/>
            <person name="Bielicki L."/>
            <person name="Scott K."/>
            <person name="Holmes A."/>
            <person name="Harkins R."/>
            <person name="Harris A."/>
            <person name="Strong C.M."/>
            <person name="Hou S."/>
            <person name="Tomlinson C."/>
            <person name="Dauphin-Kohlberg S."/>
            <person name="Kozlowicz-Reilly A."/>
            <person name="Leonard S."/>
            <person name="Rohlfing T."/>
            <person name="Rock S.M."/>
            <person name="Tin-Wollam A.-M."/>
            <person name="Abbott A."/>
            <person name="Minx P."/>
            <person name="Maupin R."/>
            <person name="Strowmatt C."/>
            <person name="Latreille P."/>
            <person name="Miller N."/>
            <person name="Johnson D."/>
            <person name="Murray J."/>
            <person name="Woessner J.P."/>
            <person name="Wendl M.C."/>
            <person name="Yang S.-P."/>
            <person name="Schultz B.R."/>
            <person name="Wallis J.W."/>
            <person name="Spieth J."/>
            <person name="Bieri T.A."/>
            <person name="Nelson J.O."/>
            <person name="Berkowicz N."/>
            <person name="Wohldmann P.E."/>
            <person name="Cook L.L."/>
            <person name="Hickenbotham M.T."/>
            <person name="Eldred J."/>
            <person name="Williams D."/>
            <person name="Bedell J.A."/>
            <person name="Mardis E.R."/>
            <person name="Clifton S.W."/>
            <person name="Chissoe S.L."/>
            <person name="Marra M.A."/>
            <person name="Raymond C."/>
            <person name="Haugen E."/>
            <person name="Gillett W."/>
            <person name="Zhou Y."/>
            <person name="James R."/>
            <person name="Phelps K."/>
            <person name="Iadanoto S."/>
            <person name="Bubb K."/>
            <person name="Simms E."/>
            <person name="Levy R."/>
            <person name="Clendenning J."/>
            <person name="Kaul R."/>
            <person name="Kent W.J."/>
            <person name="Furey T.S."/>
            <person name="Baertsch R.A."/>
            <person name="Brent M.R."/>
            <person name="Keibler E."/>
            <person name="Flicek P."/>
            <person name="Bork P."/>
            <person name="Suyama M."/>
            <person name="Bailey J.A."/>
            <person name="Portnoy M.E."/>
            <person name="Torrents D."/>
            <person name="Chinwalla A.T."/>
            <person name="Gish W.R."/>
            <person name="Eddy S.R."/>
            <person name="McPherson J.D."/>
            <person name="Olson M.V."/>
            <person name="Eichler E.E."/>
            <person name="Green E.D."/>
            <person name="Waterston R.H."/>
            <person name="Wilson R.K."/>
        </authorList>
    </citation>
    <scope>NUCLEOTIDE SEQUENCE [LARGE SCALE GENOMIC DNA]</scope>
</reference>
<reference key="4">
    <citation type="journal article" date="2005" name="J. Biol. Chem.">
        <title>Identification and characterization of human archaemetzincin-1 and - 2, two novel members of a family of metalloproteases widely distributed in Archaea.</title>
        <authorList>
            <person name="Diaz-Perales A."/>
            <person name="Quesada V."/>
            <person name="Peinado J.R."/>
            <person name="Ugalde A.P."/>
            <person name="Alvarez J."/>
            <person name="Suarez M.F."/>
            <person name="Gomis-Rueth X."/>
            <person name="Lopez-Otin C."/>
        </authorList>
    </citation>
    <scope>RETRACTED PAPER</scope>
</reference>
<reference key="5">
    <citation type="journal article" date="2019" name="J. Biol. Chem.">
        <authorList>
            <person name="Diaz-Perales A."/>
            <person name="Quesada V."/>
            <person name="Peinado J.R."/>
            <person name="Ugalde A.P."/>
            <person name="Alvarez J."/>
            <person name="Suarez M.F."/>
            <person name="Gomis-Rueth F.X."/>
            <person name="Lopez-Otin C."/>
        </authorList>
    </citation>
    <scope>RETRACTION NOTICE OF PUBMED:15972818</scope>
</reference>
<feature type="chain" id="PRO_0000159614" description="Archaemetzincin-1">
    <location>
        <begin position="1"/>
        <end position="498"/>
    </location>
</feature>
<feature type="region of interest" description="Disordered" evidence="3">
    <location>
        <begin position="332"/>
        <end position="381"/>
    </location>
</feature>
<feature type="active site" description="Proton acceptor" evidence="2">
    <location>
        <position position="262"/>
    </location>
</feature>
<feature type="binding site" evidence="1">
    <location>
        <position position="261"/>
    </location>
    <ligand>
        <name>Zn(2+)</name>
        <dbReference type="ChEBI" id="CHEBI:29105"/>
        <label>1</label>
        <note>catalytic</note>
    </ligand>
</feature>
<feature type="binding site" evidence="1">
    <location>
        <position position="265"/>
    </location>
    <ligand>
        <name>Zn(2+)</name>
        <dbReference type="ChEBI" id="CHEBI:29105"/>
        <label>1</label>
        <note>catalytic</note>
    </ligand>
</feature>
<feature type="binding site" evidence="1">
    <location>
        <position position="272"/>
    </location>
    <ligand>
        <name>Zn(2+)</name>
        <dbReference type="ChEBI" id="CHEBI:29105"/>
        <label>2</label>
    </ligand>
</feature>
<feature type="binding site" evidence="1">
    <location>
        <position position="277"/>
    </location>
    <ligand>
        <name>Zn(2+)</name>
        <dbReference type="ChEBI" id="CHEBI:29105"/>
        <label>2</label>
    </ligand>
</feature>
<feature type="binding site" evidence="1">
    <location>
        <position position="296"/>
    </location>
    <ligand>
        <name>Zn(2+)</name>
        <dbReference type="ChEBI" id="CHEBI:29105"/>
        <label>2</label>
    </ligand>
</feature>
<feature type="binding site" evidence="1">
    <location>
        <position position="299"/>
    </location>
    <ligand>
        <name>Zn(2+)</name>
        <dbReference type="ChEBI" id="CHEBI:29105"/>
        <label>2</label>
    </ligand>
</feature>
<feature type="splice variant" id="VSP_055187" description="In isoform 2." evidence="5">
    <original>EVGVCSFARFSGEFPKSGPSAPDLALVEAAADGPEAPLQDRGWALCFSALGMVQCCKVTCHELCHLLGLGNCRWLRCLMQGALSLDEALRRPLDLCP</original>
    <variation>GHVPRALPPSGPGELPLAPLPHAGCAQPGRGPAAAPGPLSHLPEEAAACPGFQAHREVPETLHLDSGGGGDVAQPGGGGAVSVGGHPACQRRLGHVL</variation>
    <location>
        <begin position="201"/>
        <end position="297"/>
    </location>
</feature>
<feature type="splice variant" id="VSP_055188" description="In isoform 2." evidence="5">
    <location>
        <begin position="298"/>
        <end position="498"/>
    </location>
</feature>
<feature type="sequence variant" id="VAR_024849" description="In dbSNP:rs7776970.">
    <original>R</original>
    <variation>H</variation>
    <location>
        <position position="491"/>
    </location>
</feature>
<proteinExistence type="evidence at protein level"/>
<protein>
    <recommendedName>
        <fullName>Archaemetzincin-1</fullName>
        <ecNumber evidence="1">3.4.-.-</ecNumber>
    </recommendedName>
    <alternativeName>
        <fullName>Archeobacterial metalloproteinase-like protein 1</fullName>
    </alternativeName>
</protein>
<evidence type="ECO:0000250" key="1">
    <source>
        <dbReference type="UniProtKB" id="Q8TXW1"/>
    </source>
</evidence>
<evidence type="ECO:0000255" key="2">
    <source>
        <dbReference type="PROSITE-ProRule" id="PRU10095"/>
    </source>
</evidence>
<evidence type="ECO:0000256" key="3">
    <source>
        <dbReference type="SAM" id="MobiDB-lite"/>
    </source>
</evidence>
<evidence type="ECO:0000269" key="4">
    <source>
    </source>
</evidence>
<evidence type="ECO:0000303" key="5">
    <source>
    </source>
</evidence>
<evidence type="ECO:0000305" key="6"/>
<evidence type="ECO:0000305" key="7">
    <source>
    </source>
</evidence>
<keyword id="KW-0025">Alternative splicing</keyword>
<keyword id="KW-0378">Hydrolase</keyword>
<keyword id="KW-0479">Metal-binding</keyword>
<keyword id="KW-0482">Metalloprotease</keyword>
<keyword id="KW-0645">Protease</keyword>
<keyword id="KW-1267">Proteomics identification</keyword>
<keyword id="KW-1185">Reference proteome</keyword>
<keyword id="KW-0862">Zinc</keyword>
<accession>Q400G9</accession>
<accession>B3KRS0</accession>
<accession>Q8TF51</accession>
<organism>
    <name type="scientific">Homo sapiens</name>
    <name type="common">Human</name>
    <dbReference type="NCBI Taxonomy" id="9606"/>
    <lineage>
        <taxon>Eukaryota</taxon>
        <taxon>Metazoa</taxon>
        <taxon>Chordata</taxon>
        <taxon>Craniata</taxon>
        <taxon>Vertebrata</taxon>
        <taxon>Euteleostomi</taxon>
        <taxon>Mammalia</taxon>
        <taxon>Eutheria</taxon>
        <taxon>Euarchontoglires</taxon>
        <taxon>Primates</taxon>
        <taxon>Haplorrhini</taxon>
        <taxon>Catarrhini</taxon>
        <taxon>Hominidae</taxon>
        <taxon>Homo</taxon>
    </lineage>
</organism>
<comment type="function">
    <text evidence="1">Probable zinc metalloprotease.</text>
</comment>
<comment type="cofactor">
    <cofactor evidence="1">
        <name>Zn(2+)</name>
        <dbReference type="ChEBI" id="CHEBI:29105"/>
    </cofactor>
    <text evidence="1">Binds 2 Zn(2+) ions per subunit. One is catalytic, whereas the other seems to have a structural role.</text>
</comment>
<comment type="alternative products">
    <event type="alternative splicing"/>
    <isoform>
        <id>Q400G9-1</id>
        <name>1</name>
        <sequence type="displayed"/>
    </isoform>
    <isoform>
        <id>Q400G9-2</id>
        <name>2</name>
        <sequence type="described" ref="VSP_055187 VSP_055188"/>
    </isoform>
</comment>
<comment type="similarity">
    <text evidence="6">Belongs to the peptidase M54 family.</text>
</comment>
<comment type="caution">
    <text evidence="4 7">An article reported the identification and characterization of this protein as zinc metalloprotease in different tissues; however, this paper was later retracted.</text>
</comment>
<gene>
    <name type="primary">AMZ1</name>
    <name type="synonym">KIAA1950</name>
</gene>
<name>AMZ1_HUMAN</name>
<dbReference type="EC" id="3.4.-.-" evidence="1"/>
<dbReference type="EMBL" id="AJ635357">
    <property type="protein sequence ID" value="CAG25749.1"/>
    <property type="molecule type" value="mRNA"/>
</dbReference>
<dbReference type="EMBL" id="AB075830">
    <property type="protein sequence ID" value="BAB85536.2"/>
    <property type="molecule type" value="mRNA"/>
</dbReference>
<dbReference type="EMBL" id="AK092107">
    <property type="protein sequence ID" value="BAG52482.1"/>
    <property type="molecule type" value="mRNA"/>
</dbReference>
<dbReference type="EMBL" id="AC006028">
    <property type="status" value="NOT_ANNOTATED_CDS"/>
    <property type="molecule type" value="Genomic_DNA"/>
</dbReference>
<dbReference type="CCDS" id="CCDS34589.1">
    <molecule id="Q400G9-1"/>
</dbReference>
<dbReference type="CCDS" id="CCDS64582.1">
    <molecule id="Q400G9-2"/>
</dbReference>
<dbReference type="RefSeq" id="NP_001271284.1">
    <molecule id="Q400G9-2"/>
    <property type="nucleotide sequence ID" value="NM_001284355.4"/>
</dbReference>
<dbReference type="RefSeq" id="NP_001308695.1">
    <property type="nucleotide sequence ID" value="NM_001321766.1"/>
</dbReference>
<dbReference type="RefSeq" id="NP_001371672.1">
    <molecule id="Q400G9-1"/>
    <property type="nucleotide sequence ID" value="NM_001384743.1"/>
</dbReference>
<dbReference type="RefSeq" id="NP_597720.1">
    <molecule id="Q400G9-1"/>
    <property type="nucleotide sequence ID" value="NM_133463.4"/>
</dbReference>
<dbReference type="RefSeq" id="XP_011513452.1">
    <property type="nucleotide sequence ID" value="XM_011515150.2"/>
</dbReference>
<dbReference type="RefSeq" id="XP_047275882.1">
    <molecule id="Q400G9-2"/>
    <property type="nucleotide sequence ID" value="XM_047419926.1"/>
</dbReference>
<dbReference type="RefSeq" id="XP_054213332.1">
    <molecule id="Q400G9-2"/>
    <property type="nucleotide sequence ID" value="XM_054357357.1"/>
</dbReference>
<dbReference type="SMR" id="Q400G9"/>
<dbReference type="BioGRID" id="127579">
    <property type="interactions" value="55"/>
</dbReference>
<dbReference type="FunCoup" id="Q400G9">
    <property type="interactions" value="16"/>
</dbReference>
<dbReference type="IntAct" id="Q400G9">
    <property type="interactions" value="41"/>
</dbReference>
<dbReference type="STRING" id="9606.ENSP00000308149"/>
<dbReference type="MEROPS" id="M54.003"/>
<dbReference type="iPTMnet" id="Q400G9"/>
<dbReference type="PhosphoSitePlus" id="Q400G9"/>
<dbReference type="BioMuta" id="AMZ1"/>
<dbReference type="DMDM" id="85540611"/>
<dbReference type="MassIVE" id="Q400G9"/>
<dbReference type="PaxDb" id="9606-ENSP00000308149"/>
<dbReference type="PeptideAtlas" id="Q400G9"/>
<dbReference type="ProteomicsDB" id="61924">
    <molecule id="Q400G9-1"/>
</dbReference>
<dbReference type="Antibodypedia" id="11135">
    <property type="antibodies" value="49 antibodies from 18 providers"/>
</dbReference>
<dbReference type="DNASU" id="155185"/>
<dbReference type="Ensembl" id="ENST00000312371.8">
    <molecule id="Q400G9-1"/>
    <property type="protein sequence ID" value="ENSP00000308149.4"/>
    <property type="gene ID" value="ENSG00000174945.14"/>
</dbReference>
<dbReference type="Ensembl" id="ENST00000407112.1">
    <molecule id="Q400G9-2"/>
    <property type="protein sequence ID" value="ENSP00000386020.1"/>
    <property type="gene ID" value="ENSG00000174945.14"/>
</dbReference>
<dbReference type="Ensembl" id="ENST00000683327.1">
    <molecule id="Q400G9-1"/>
    <property type="protein sequence ID" value="ENSP00000506962.1"/>
    <property type="gene ID" value="ENSG00000174945.14"/>
</dbReference>
<dbReference type="GeneID" id="155185"/>
<dbReference type="KEGG" id="hsa:155185"/>
<dbReference type="MANE-Select" id="ENST00000683327.1">
    <property type="protein sequence ID" value="ENSP00000506962.1"/>
    <property type="RefSeq nucleotide sequence ID" value="NM_001384743.1"/>
    <property type="RefSeq protein sequence ID" value="NP_001371672.1"/>
</dbReference>
<dbReference type="UCSC" id="uc003smr.3">
    <molecule id="Q400G9-1"/>
    <property type="organism name" value="human"/>
</dbReference>
<dbReference type="AGR" id="HGNC:22231"/>
<dbReference type="CTD" id="155185"/>
<dbReference type="DisGeNET" id="155185"/>
<dbReference type="GeneCards" id="AMZ1"/>
<dbReference type="HGNC" id="HGNC:22231">
    <property type="gene designation" value="AMZ1"/>
</dbReference>
<dbReference type="HPA" id="ENSG00000174945">
    <property type="expression patterns" value="Tissue enriched (brain)"/>
</dbReference>
<dbReference type="MIM" id="615168">
    <property type="type" value="gene"/>
</dbReference>
<dbReference type="neXtProt" id="NX_Q400G9"/>
<dbReference type="OpenTargets" id="ENSG00000174945"/>
<dbReference type="PharmGKB" id="PA162376413"/>
<dbReference type="VEuPathDB" id="HostDB:ENSG00000174945"/>
<dbReference type="eggNOG" id="ENOG502QV2Q">
    <property type="taxonomic scope" value="Eukaryota"/>
</dbReference>
<dbReference type="GeneTree" id="ENSGT00530000063996"/>
<dbReference type="HOGENOM" id="CLU_029710_0_0_1"/>
<dbReference type="InParanoid" id="Q400G9"/>
<dbReference type="OMA" id="LAKWEMF"/>
<dbReference type="OrthoDB" id="2365600at2759"/>
<dbReference type="PAN-GO" id="Q400G9">
    <property type="GO annotations" value="0 GO annotations based on evolutionary models"/>
</dbReference>
<dbReference type="PhylomeDB" id="Q400G9"/>
<dbReference type="TreeFam" id="TF328603"/>
<dbReference type="PathwayCommons" id="Q400G9"/>
<dbReference type="SignaLink" id="Q400G9"/>
<dbReference type="BioGRID-ORCS" id="155185">
    <property type="hits" value="20 hits in 1144 CRISPR screens"/>
</dbReference>
<dbReference type="ChiTaRS" id="AMZ1">
    <property type="organism name" value="human"/>
</dbReference>
<dbReference type="GenomeRNAi" id="155185"/>
<dbReference type="Pharos" id="Q400G9">
    <property type="development level" value="Tdark"/>
</dbReference>
<dbReference type="PRO" id="PR:Q400G9"/>
<dbReference type="Proteomes" id="UP000005640">
    <property type="component" value="Chromosome 7"/>
</dbReference>
<dbReference type="RNAct" id="Q400G9">
    <property type="molecule type" value="protein"/>
</dbReference>
<dbReference type="Bgee" id="ENSG00000174945">
    <property type="expression patterns" value="Expressed in male germ line stem cell (sensu Vertebrata) in testis and 136 other cell types or tissues"/>
</dbReference>
<dbReference type="ExpressionAtlas" id="Q400G9">
    <property type="expression patterns" value="baseline and differential"/>
</dbReference>
<dbReference type="GO" id="GO:0046872">
    <property type="term" value="F:metal ion binding"/>
    <property type="evidence" value="ECO:0007669"/>
    <property type="project" value="UniProtKB-KW"/>
</dbReference>
<dbReference type="GO" id="GO:0008237">
    <property type="term" value="F:metallopeptidase activity"/>
    <property type="evidence" value="ECO:0007669"/>
    <property type="project" value="UniProtKB-KW"/>
</dbReference>
<dbReference type="GO" id="GO:0006508">
    <property type="term" value="P:proteolysis"/>
    <property type="evidence" value="ECO:0007669"/>
    <property type="project" value="UniProtKB-KW"/>
</dbReference>
<dbReference type="CDD" id="cd11375">
    <property type="entry name" value="Peptidase_M54"/>
    <property type="match status" value="1"/>
</dbReference>
<dbReference type="Gene3D" id="3.40.390.10">
    <property type="entry name" value="Collagenase (Catalytic Domain)"/>
    <property type="match status" value="1"/>
</dbReference>
<dbReference type="InterPro" id="IPR052009">
    <property type="entry name" value="Archaemetzincin"/>
</dbReference>
<dbReference type="InterPro" id="IPR024079">
    <property type="entry name" value="MetalloPept_cat_dom_sf"/>
</dbReference>
<dbReference type="InterPro" id="IPR012962">
    <property type="entry name" value="Pept_M54_archaemetzincn"/>
</dbReference>
<dbReference type="PANTHER" id="PTHR32205:SF4">
    <property type="entry name" value="ARCHAEMETZINCIN-1"/>
    <property type="match status" value="1"/>
</dbReference>
<dbReference type="PANTHER" id="PTHR32205">
    <property type="entry name" value="ARCHAEMETZINCIN-2-RELATED"/>
    <property type="match status" value="1"/>
</dbReference>
<dbReference type="SUPFAM" id="SSF55486">
    <property type="entry name" value="Metalloproteases ('zincins'), catalytic domain"/>
    <property type="match status" value="1"/>
</dbReference>
<dbReference type="PROSITE" id="PS00142">
    <property type="entry name" value="ZINC_PROTEASE"/>
    <property type="match status" value="1"/>
</dbReference>
<sequence>MLQCRPAQEFSFGPRALKDALVSTDAALQQLYVSAFSPAERLFLAEAYNPQRTLFCTLLIRTGFDWLLSRPEAPEDFQTFHASLQHRKPRLARKHIYLQPIDLSEEPVGSSLLHQLCSCTEAFFLGLRVKCLPSVAAASIRCSSRPSRDSDRLQLHTDGILSFLKNNKPGDALCVLGLTLSDLYPHEAWSFTFSKFLPGHEVGVCSFARFSGEFPKSGPSAPDLALVEAAADGPEAPLQDRGWALCFSALGMVQCCKVTCHELCHLLGLGNCRWLRCLMQGALSLDEALRRPLDLCPICLRKLQHVLGFRLIERYQRLYTWTQAVVGTWPSQEAGEPSVWEDTPPASADSGMCCESDSEPGTSVSEPLTPDAGSHTFASGPEEGLSYLAASEAPLPPGGPAEAIKEHERWLAMCIQALQREVAEEDLVQVDRAVDALDRWEMFTGQLPATRQDPPSSRDSVGLRKVLGDKFSSLRRKLSARKLARAESAPRPWDGEES</sequence>